<gene>
    <name evidence="1" type="primary">obg</name>
    <name type="ordered locus">GDI3173</name>
    <name type="ordered locus">Gdia_3187</name>
</gene>
<evidence type="ECO:0000255" key="1">
    <source>
        <dbReference type="HAMAP-Rule" id="MF_01454"/>
    </source>
</evidence>
<evidence type="ECO:0000255" key="2">
    <source>
        <dbReference type="PROSITE-ProRule" id="PRU01231"/>
    </source>
</evidence>
<evidence type="ECO:0000256" key="3">
    <source>
        <dbReference type="SAM" id="MobiDB-lite"/>
    </source>
</evidence>
<evidence type="ECO:0000305" key="4"/>
<proteinExistence type="inferred from homology"/>
<organism>
    <name type="scientific">Gluconacetobacter diazotrophicus (strain ATCC 49037 / DSM 5601 / CCUG 37298 / CIP 103539 / LMG 7603 / PAl5)</name>
    <dbReference type="NCBI Taxonomy" id="272568"/>
    <lineage>
        <taxon>Bacteria</taxon>
        <taxon>Pseudomonadati</taxon>
        <taxon>Pseudomonadota</taxon>
        <taxon>Alphaproteobacteria</taxon>
        <taxon>Acetobacterales</taxon>
        <taxon>Acetobacteraceae</taxon>
        <taxon>Gluconacetobacter</taxon>
    </lineage>
</organism>
<keyword id="KW-0963">Cytoplasm</keyword>
<keyword id="KW-0342">GTP-binding</keyword>
<keyword id="KW-0378">Hydrolase</keyword>
<keyword id="KW-0460">Magnesium</keyword>
<keyword id="KW-0479">Metal-binding</keyword>
<keyword id="KW-0547">Nucleotide-binding</keyword>
<keyword id="KW-1185">Reference proteome</keyword>
<dbReference type="EC" id="3.6.5.-" evidence="1"/>
<dbReference type="EMBL" id="AM889285">
    <property type="protein sequence ID" value="CAP57116.1"/>
    <property type="status" value="ALT_INIT"/>
    <property type="molecule type" value="Genomic_DNA"/>
</dbReference>
<dbReference type="EMBL" id="CP001189">
    <property type="protein sequence ID" value="ACI52917.1"/>
    <property type="molecule type" value="Genomic_DNA"/>
</dbReference>
<dbReference type="RefSeq" id="WP_012554807.1">
    <property type="nucleotide sequence ID" value="NC_010125.1"/>
</dbReference>
<dbReference type="SMR" id="A9H0F1"/>
<dbReference type="STRING" id="272568.GDI3173"/>
<dbReference type="KEGG" id="gdi:GDI3173"/>
<dbReference type="KEGG" id="gdj:Gdia_3187"/>
<dbReference type="eggNOG" id="COG0536">
    <property type="taxonomic scope" value="Bacteria"/>
</dbReference>
<dbReference type="HOGENOM" id="CLU_011747_2_0_5"/>
<dbReference type="OrthoDB" id="9807318at2"/>
<dbReference type="Proteomes" id="UP000001176">
    <property type="component" value="Chromosome"/>
</dbReference>
<dbReference type="GO" id="GO:0005737">
    <property type="term" value="C:cytoplasm"/>
    <property type="evidence" value="ECO:0007669"/>
    <property type="project" value="UniProtKB-SubCell"/>
</dbReference>
<dbReference type="GO" id="GO:0005525">
    <property type="term" value="F:GTP binding"/>
    <property type="evidence" value="ECO:0007669"/>
    <property type="project" value="UniProtKB-UniRule"/>
</dbReference>
<dbReference type="GO" id="GO:0003924">
    <property type="term" value="F:GTPase activity"/>
    <property type="evidence" value="ECO:0007669"/>
    <property type="project" value="UniProtKB-UniRule"/>
</dbReference>
<dbReference type="GO" id="GO:0000287">
    <property type="term" value="F:magnesium ion binding"/>
    <property type="evidence" value="ECO:0007669"/>
    <property type="project" value="InterPro"/>
</dbReference>
<dbReference type="GO" id="GO:0042254">
    <property type="term" value="P:ribosome biogenesis"/>
    <property type="evidence" value="ECO:0007669"/>
    <property type="project" value="UniProtKB-UniRule"/>
</dbReference>
<dbReference type="CDD" id="cd01898">
    <property type="entry name" value="Obg"/>
    <property type="match status" value="1"/>
</dbReference>
<dbReference type="FunFam" id="2.70.210.12:FF:000001">
    <property type="entry name" value="GTPase Obg"/>
    <property type="match status" value="1"/>
</dbReference>
<dbReference type="Gene3D" id="2.70.210.12">
    <property type="entry name" value="GTP1/OBG domain"/>
    <property type="match status" value="1"/>
</dbReference>
<dbReference type="Gene3D" id="3.40.50.300">
    <property type="entry name" value="P-loop containing nucleotide triphosphate hydrolases"/>
    <property type="match status" value="1"/>
</dbReference>
<dbReference type="HAMAP" id="MF_01454">
    <property type="entry name" value="GTPase_Obg"/>
    <property type="match status" value="1"/>
</dbReference>
<dbReference type="InterPro" id="IPR031167">
    <property type="entry name" value="G_OBG"/>
</dbReference>
<dbReference type="InterPro" id="IPR006073">
    <property type="entry name" value="GTP-bd"/>
</dbReference>
<dbReference type="InterPro" id="IPR014100">
    <property type="entry name" value="GTP-bd_Obg/CgtA"/>
</dbReference>
<dbReference type="InterPro" id="IPR006074">
    <property type="entry name" value="GTP1-OBG_CS"/>
</dbReference>
<dbReference type="InterPro" id="IPR006169">
    <property type="entry name" value="GTP1_OBG_dom"/>
</dbReference>
<dbReference type="InterPro" id="IPR036726">
    <property type="entry name" value="GTP1_OBG_dom_sf"/>
</dbReference>
<dbReference type="InterPro" id="IPR045086">
    <property type="entry name" value="OBG_GTPase"/>
</dbReference>
<dbReference type="InterPro" id="IPR027417">
    <property type="entry name" value="P-loop_NTPase"/>
</dbReference>
<dbReference type="NCBIfam" id="TIGR02729">
    <property type="entry name" value="Obg_CgtA"/>
    <property type="match status" value="1"/>
</dbReference>
<dbReference type="NCBIfam" id="NF008955">
    <property type="entry name" value="PRK12297.1"/>
    <property type="match status" value="1"/>
</dbReference>
<dbReference type="NCBIfam" id="NF008956">
    <property type="entry name" value="PRK12299.1"/>
    <property type="match status" value="1"/>
</dbReference>
<dbReference type="PANTHER" id="PTHR11702">
    <property type="entry name" value="DEVELOPMENTALLY REGULATED GTP-BINDING PROTEIN-RELATED"/>
    <property type="match status" value="1"/>
</dbReference>
<dbReference type="PANTHER" id="PTHR11702:SF31">
    <property type="entry name" value="MITOCHONDRIAL RIBOSOME-ASSOCIATED GTPASE 2"/>
    <property type="match status" value="1"/>
</dbReference>
<dbReference type="Pfam" id="PF01018">
    <property type="entry name" value="GTP1_OBG"/>
    <property type="match status" value="1"/>
</dbReference>
<dbReference type="Pfam" id="PF01926">
    <property type="entry name" value="MMR_HSR1"/>
    <property type="match status" value="1"/>
</dbReference>
<dbReference type="PIRSF" id="PIRSF002401">
    <property type="entry name" value="GTP_bd_Obg/CgtA"/>
    <property type="match status" value="1"/>
</dbReference>
<dbReference type="PRINTS" id="PR00326">
    <property type="entry name" value="GTP1OBG"/>
</dbReference>
<dbReference type="SUPFAM" id="SSF82051">
    <property type="entry name" value="Obg GTP-binding protein N-terminal domain"/>
    <property type="match status" value="1"/>
</dbReference>
<dbReference type="SUPFAM" id="SSF52540">
    <property type="entry name" value="P-loop containing nucleoside triphosphate hydrolases"/>
    <property type="match status" value="1"/>
</dbReference>
<dbReference type="PROSITE" id="PS51710">
    <property type="entry name" value="G_OBG"/>
    <property type="match status" value="1"/>
</dbReference>
<dbReference type="PROSITE" id="PS00905">
    <property type="entry name" value="GTP1_OBG"/>
    <property type="match status" value="1"/>
</dbReference>
<dbReference type="PROSITE" id="PS51883">
    <property type="entry name" value="OBG"/>
    <property type="match status" value="1"/>
</dbReference>
<reference key="1">
    <citation type="journal article" date="2009" name="BMC Genomics">
        <title>Complete genome sequence of the sugarcane nitrogen-fixing endophyte Gluconacetobacter diazotrophicus Pal5.</title>
        <authorList>
            <person name="Bertalan M."/>
            <person name="Albano R."/>
            <person name="de Padua V."/>
            <person name="Rouws L."/>
            <person name="Rojas C."/>
            <person name="Hemerly A."/>
            <person name="Teixeira K."/>
            <person name="Schwab S."/>
            <person name="Araujo J."/>
            <person name="Oliveira A."/>
            <person name="Franca L."/>
            <person name="Magalhaes V."/>
            <person name="Alqueres S."/>
            <person name="Cardoso A."/>
            <person name="Almeida W."/>
            <person name="Loureiro M.M."/>
            <person name="Nogueira E."/>
            <person name="Cidade D."/>
            <person name="Oliveira D."/>
            <person name="Simao T."/>
            <person name="Macedo J."/>
            <person name="Valadao A."/>
            <person name="Dreschsel M."/>
            <person name="Freitas F."/>
            <person name="Vidal M."/>
            <person name="Guedes H."/>
            <person name="Rodrigues E."/>
            <person name="Meneses C."/>
            <person name="Brioso P."/>
            <person name="Pozzer L."/>
            <person name="Figueiredo D."/>
            <person name="Montano H."/>
            <person name="Junior J."/>
            <person name="de Souza Filho G."/>
            <person name="Martin Quintana Flores V."/>
            <person name="Ferreira B."/>
            <person name="Branco A."/>
            <person name="Gonzalez P."/>
            <person name="Guillobel H."/>
            <person name="Lemos M."/>
            <person name="Seibel L."/>
            <person name="Macedo J."/>
            <person name="Alves-Ferreira M."/>
            <person name="Sachetto-Martins G."/>
            <person name="Coelho A."/>
            <person name="Santos E."/>
            <person name="Amaral G."/>
            <person name="Neves A."/>
            <person name="Pacheco A.B."/>
            <person name="Carvalho D."/>
            <person name="Lery L."/>
            <person name="Bisch P."/>
            <person name="Rossle S.C."/>
            <person name="Urmenyi T."/>
            <person name="Rael Pereira A."/>
            <person name="Silva R."/>
            <person name="Rondinelli E."/>
            <person name="von Kruger W."/>
            <person name="Martins O."/>
            <person name="Baldani J.I."/>
            <person name="Ferreira P.C."/>
        </authorList>
    </citation>
    <scope>NUCLEOTIDE SEQUENCE [LARGE SCALE GENOMIC DNA]</scope>
    <source>
        <strain>ATCC 49037 / DSM 5601 / CCUG 37298 / CIP 103539 / LMG 7603 / PAl5</strain>
    </source>
</reference>
<reference key="2">
    <citation type="journal article" date="2010" name="Stand. Genomic Sci.">
        <title>Two genome sequences of the same bacterial strain, Gluconacetobacter diazotrophicus PAl 5, suggest a new standard in genome sequence submission.</title>
        <authorList>
            <person name="Giongo A."/>
            <person name="Tyler H.L."/>
            <person name="Zipperer U.N."/>
            <person name="Triplett E.W."/>
        </authorList>
    </citation>
    <scope>NUCLEOTIDE SEQUENCE [LARGE SCALE GENOMIC DNA]</scope>
    <source>
        <strain>ATCC 49037 / DSM 5601 / CCUG 37298 / CIP 103539 / LMG 7603 / PAl5</strain>
    </source>
</reference>
<name>OBG_GLUDA</name>
<accession>A9H0F1</accession>
<accession>B5ZKE3</accession>
<protein>
    <recommendedName>
        <fullName evidence="1">GTPase Obg</fullName>
        <ecNumber evidence="1">3.6.5.-</ecNumber>
    </recommendedName>
    <alternativeName>
        <fullName evidence="1">GTP-binding protein Obg</fullName>
    </alternativeName>
</protein>
<comment type="function">
    <text evidence="1">An essential GTPase which binds GTP, GDP and possibly (p)ppGpp with moderate affinity, with high nucleotide exchange rates and a fairly low GTP hydrolysis rate. Plays a role in control of the cell cycle, stress response, ribosome biogenesis and in those bacteria that undergo differentiation, in morphogenesis control.</text>
</comment>
<comment type="cofactor">
    <cofactor evidence="1">
        <name>Mg(2+)</name>
        <dbReference type="ChEBI" id="CHEBI:18420"/>
    </cofactor>
</comment>
<comment type="subunit">
    <text evidence="1">Monomer.</text>
</comment>
<comment type="subcellular location">
    <subcellularLocation>
        <location evidence="1">Cytoplasm</location>
    </subcellularLocation>
</comment>
<comment type="similarity">
    <text evidence="1">Belongs to the TRAFAC class OBG-HflX-like GTPase superfamily. OBG GTPase family.</text>
</comment>
<comment type="sequence caution" evidence="4">
    <conflict type="erroneous initiation">
        <sequence resource="EMBL-CDS" id="CAP57116"/>
    </conflict>
    <text>Extended N-terminus.</text>
</comment>
<feature type="chain" id="PRO_0000385957" description="GTPase Obg">
    <location>
        <begin position="1"/>
        <end position="350"/>
    </location>
</feature>
<feature type="domain" description="Obg" evidence="2">
    <location>
        <begin position="1"/>
        <end position="159"/>
    </location>
</feature>
<feature type="domain" description="OBG-type G" evidence="1">
    <location>
        <begin position="160"/>
        <end position="328"/>
    </location>
</feature>
<feature type="region of interest" description="Disordered" evidence="3">
    <location>
        <begin position="331"/>
        <end position="350"/>
    </location>
</feature>
<feature type="binding site" evidence="1">
    <location>
        <begin position="166"/>
        <end position="173"/>
    </location>
    <ligand>
        <name>GTP</name>
        <dbReference type="ChEBI" id="CHEBI:37565"/>
    </ligand>
</feature>
<feature type="binding site" evidence="1">
    <location>
        <position position="173"/>
    </location>
    <ligand>
        <name>Mg(2+)</name>
        <dbReference type="ChEBI" id="CHEBI:18420"/>
    </ligand>
</feature>
<feature type="binding site" evidence="1">
    <location>
        <begin position="191"/>
        <end position="195"/>
    </location>
    <ligand>
        <name>GTP</name>
        <dbReference type="ChEBI" id="CHEBI:37565"/>
    </ligand>
</feature>
<feature type="binding site" evidence="1">
    <location>
        <position position="193"/>
    </location>
    <ligand>
        <name>Mg(2+)</name>
        <dbReference type="ChEBI" id="CHEBI:18420"/>
    </ligand>
</feature>
<feature type="binding site" evidence="1">
    <location>
        <begin position="213"/>
        <end position="216"/>
    </location>
    <ligand>
        <name>GTP</name>
        <dbReference type="ChEBI" id="CHEBI:37565"/>
    </ligand>
</feature>
<feature type="binding site" evidence="1">
    <location>
        <begin position="280"/>
        <end position="283"/>
    </location>
    <ligand>
        <name>GTP</name>
        <dbReference type="ChEBI" id="CHEBI:37565"/>
    </ligand>
</feature>
<feature type="binding site" evidence="1">
    <location>
        <begin position="309"/>
        <end position="311"/>
    </location>
    <ligand>
        <name>GTP</name>
        <dbReference type="ChEBI" id="CHEBI:37565"/>
    </ligand>
</feature>
<sequence>MKFLDQAKIYVKSGDGGDGVVAFRREKYIEFGGPDGGNGGRGGDIVFEAAGNLNTLIDFRYTQHFRARKGGNGAGSDRTGAAAAPVLIQVPVGTQIFDEDRETMLADLDQPGKRIVLCHGGDGGRGNAHFKTSTNRAPRRADKGWPGEERWIWLRLKLIADVGLVGLPNAGKSTFLSVVSAARPKIADYPFTTLHPQLGVVRLSVAEEFVIADIPGLIEGAHEGAGLGDRFLGHVERCAVLLHLVDGAAGDVVKAWRTIRHELEAYDGGLAAKPEIIALNKIDAMTPQQISSRRRALEKASGMPVVTLSGVTRQNLDDVLRLLQDRVTATREAARDAAPPQAAAGREETA</sequence>